<organism>
    <name type="scientific">Methylorubrum populi (strain ATCC BAA-705 / NCIMB 13946 / BJ001)</name>
    <name type="common">Methylobacterium populi</name>
    <dbReference type="NCBI Taxonomy" id="441620"/>
    <lineage>
        <taxon>Bacteria</taxon>
        <taxon>Pseudomonadati</taxon>
        <taxon>Pseudomonadota</taxon>
        <taxon>Alphaproteobacteria</taxon>
        <taxon>Hyphomicrobiales</taxon>
        <taxon>Methylobacteriaceae</taxon>
        <taxon>Methylorubrum</taxon>
    </lineage>
</organism>
<feature type="chain" id="PRO_1000121656" description="Large ribosomal subunit protein bL28">
    <location>
        <begin position="1"/>
        <end position="101"/>
    </location>
</feature>
<keyword id="KW-0687">Ribonucleoprotein</keyword>
<keyword id="KW-0689">Ribosomal protein</keyword>
<gene>
    <name evidence="1" type="primary">rpmB</name>
    <name type="ordered locus">Mpop_3160</name>
</gene>
<reference key="1">
    <citation type="submission" date="2008-04" db="EMBL/GenBank/DDBJ databases">
        <title>Complete sequence of chromosome of Methylobacterium populi BJ001.</title>
        <authorList>
            <consortium name="US DOE Joint Genome Institute"/>
            <person name="Copeland A."/>
            <person name="Lucas S."/>
            <person name="Lapidus A."/>
            <person name="Glavina del Rio T."/>
            <person name="Dalin E."/>
            <person name="Tice H."/>
            <person name="Bruce D."/>
            <person name="Goodwin L."/>
            <person name="Pitluck S."/>
            <person name="Chertkov O."/>
            <person name="Brettin T."/>
            <person name="Detter J.C."/>
            <person name="Han C."/>
            <person name="Kuske C.R."/>
            <person name="Schmutz J."/>
            <person name="Larimer F."/>
            <person name="Land M."/>
            <person name="Hauser L."/>
            <person name="Kyrpides N."/>
            <person name="Mikhailova N."/>
            <person name="Marx C."/>
            <person name="Richardson P."/>
        </authorList>
    </citation>
    <scope>NUCLEOTIDE SEQUENCE [LARGE SCALE GENOMIC DNA]</scope>
    <source>
        <strain>ATCC BAA-705 / NCIMB 13946 / BJ001</strain>
    </source>
</reference>
<evidence type="ECO:0000255" key="1">
    <source>
        <dbReference type="HAMAP-Rule" id="MF_00373"/>
    </source>
</evidence>
<evidence type="ECO:0000305" key="2"/>
<accession>B1ZHJ4</accession>
<dbReference type="EMBL" id="CP001029">
    <property type="protein sequence ID" value="ACB81312.1"/>
    <property type="molecule type" value="Genomic_DNA"/>
</dbReference>
<dbReference type="RefSeq" id="WP_012455029.1">
    <property type="nucleotide sequence ID" value="NC_010725.1"/>
</dbReference>
<dbReference type="SMR" id="B1ZHJ4"/>
<dbReference type="STRING" id="441620.Mpop_3160"/>
<dbReference type="KEGG" id="mpo:Mpop_3160"/>
<dbReference type="eggNOG" id="COG0227">
    <property type="taxonomic scope" value="Bacteria"/>
</dbReference>
<dbReference type="HOGENOM" id="CLU_064548_4_2_5"/>
<dbReference type="OrthoDB" id="9805609at2"/>
<dbReference type="Proteomes" id="UP000007136">
    <property type="component" value="Chromosome"/>
</dbReference>
<dbReference type="GO" id="GO:0022625">
    <property type="term" value="C:cytosolic large ribosomal subunit"/>
    <property type="evidence" value="ECO:0007669"/>
    <property type="project" value="TreeGrafter"/>
</dbReference>
<dbReference type="GO" id="GO:0003735">
    <property type="term" value="F:structural constituent of ribosome"/>
    <property type="evidence" value="ECO:0007669"/>
    <property type="project" value="InterPro"/>
</dbReference>
<dbReference type="GO" id="GO:0006412">
    <property type="term" value="P:translation"/>
    <property type="evidence" value="ECO:0007669"/>
    <property type="project" value="UniProtKB-UniRule"/>
</dbReference>
<dbReference type="Gene3D" id="2.30.170.40">
    <property type="entry name" value="Ribosomal protein L28/L24"/>
    <property type="match status" value="1"/>
</dbReference>
<dbReference type="HAMAP" id="MF_00373">
    <property type="entry name" value="Ribosomal_bL28"/>
    <property type="match status" value="1"/>
</dbReference>
<dbReference type="InterPro" id="IPR026569">
    <property type="entry name" value="Ribosomal_bL28"/>
</dbReference>
<dbReference type="InterPro" id="IPR034704">
    <property type="entry name" value="Ribosomal_bL28/bL31-like_sf"/>
</dbReference>
<dbReference type="InterPro" id="IPR001383">
    <property type="entry name" value="Ribosomal_bL28_bact-type"/>
</dbReference>
<dbReference type="InterPro" id="IPR037147">
    <property type="entry name" value="Ribosomal_bL28_sf"/>
</dbReference>
<dbReference type="NCBIfam" id="TIGR00009">
    <property type="entry name" value="L28"/>
    <property type="match status" value="1"/>
</dbReference>
<dbReference type="PANTHER" id="PTHR13528">
    <property type="entry name" value="39S RIBOSOMAL PROTEIN L28, MITOCHONDRIAL"/>
    <property type="match status" value="1"/>
</dbReference>
<dbReference type="PANTHER" id="PTHR13528:SF2">
    <property type="entry name" value="LARGE RIBOSOMAL SUBUNIT PROTEIN BL28M"/>
    <property type="match status" value="1"/>
</dbReference>
<dbReference type="Pfam" id="PF00830">
    <property type="entry name" value="Ribosomal_L28"/>
    <property type="match status" value="1"/>
</dbReference>
<dbReference type="SUPFAM" id="SSF143800">
    <property type="entry name" value="L28p-like"/>
    <property type="match status" value="1"/>
</dbReference>
<sequence length="101" mass="11313">MSRRCELTGKAVQVGHLVSHSNRKTKCRFLPNLCNVTLQSDALNRRVRLRVTAHALRSVEHRGGLDAFLIKAREIELSQTARLLKRDIEKKIAETATPAAA</sequence>
<proteinExistence type="inferred from homology"/>
<protein>
    <recommendedName>
        <fullName evidence="1">Large ribosomal subunit protein bL28</fullName>
    </recommendedName>
    <alternativeName>
        <fullName evidence="2">50S ribosomal protein L28</fullName>
    </alternativeName>
</protein>
<comment type="similarity">
    <text evidence="1">Belongs to the bacterial ribosomal protein bL28 family.</text>
</comment>
<name>RL28_METPB</name>